<name>PP2AB_BOVIN</name>
<keyword id="KW-0137">Centromere</keyword>
<keyword id="KW-0158">Chromosome</keyword>
<keyword id="KW-0963">Cytoplasm</keyword>
<keyword id="KW-0206">Cytoskeleton</keyword>
<keyword id="KW-0378">Hydrolase</keyword>
<keyword id="KW-0464">Manganese</keyword>
<keyword id="KW-0479">Metal-binding</keyword>
<keyword id="KW-0488">Methylation</keyword>
<keyword id="KW-0539">Nucleus</keyword>
<keyword id="KW-0597">Phosphoprotein</keyword>
<keyword id="KW-0904">Protein phosphatase</keyword>
<keyword id="KW-1185">Reference proteome</keyword>
<keyword id="KW-0832">Ubl conjugation</keyword>
<protein>
    <recommendedName>
        <fullName>Serine/threonine-protein phosphatase 2A catalytic subunit beta isoform</fullName>
        <shortName>PP2A-beta</shortName>
        <ecNumber evidence="2">3.1.3.16</ecNumber>
    </recommendedName>
</protein>
<gene>
    <name type="primary">PPP2CB</name>
</gene>
<sequence length="309" mass="35561">MDDKAFTKDLDQWVEQLNECKQLNENQVRTLCEKAKEILTKESNVQEVRCPVTVCGDVHGQFHDLMELFRIGGKSPDTNYLFMGDYVDRGYYSVETVTLLVALKVRYPERITILRGNHESRQITQVYGFYDECLRKYGNANVWKYFTDLFDYLPLTALVDGQIFCLHGGLSPSIDTLDHIRALDRLQEVPHEGPMCDLLWSDPDDRGGWGISPRGAGYTFGQDISETFNHANGLTLVSRAHQLVMEGYNWCHDRNVVTIFSAPNYCYRCGNQAAIMELDDTLKYSFLQFDPAPRRGEPHVTRRTPDYFL</sequence>
<dbReference type="EC" id="3.1.3.16" evidence="2"/>
<dbReference type="EMBL" id="BC120332">
    <property type="protein sequence ID" value="AAI20333.1"/>
    <property type="molecule type" value="mRNA"/>
</dbReference>
<dbReference type="RefSeq" id="NP_001069325.1">
    <property type="nucleotide sequence ID" value="NM_001075857.1"/>
</dbReference>
<dbReference type="SMR" id="Q0P594"/>
<dbReference type="FunCoup" id="Q0P594">
    <property type="interactions" value="4070"/>
</dbReference>
<dbReference type="STRING" id="9913.ENSBTAP00000012182"/>
<dbReference type="PaxDb" id="9913-ENSBTAP00000012182"/>
<dbReference type="PeptideAtlas" id="Q0P594"/>
<dbReference type="Ensembl" id="ENSBTAT00000012182.6">
    <property type="protein sequence ID" value="ENSBTAP00000012182.4"/>
    <property type="gene ID" value="ENSBTAG00000009245.6"/>
</dbReference>
<dbReference type="GeneID" id="524361"/>
<dbReference type="KEGG" id="bta:524361"/>
<dbReference type="CTD" id="5516"/>
<dbReference type="VEuPathDB" id="HostDB:ENSBTAG00000009245"/>
<dbReference type="VGNC" id="VGNC:33252">
    <property type="gene designation" value="PPP2CB"/>
</dbReference>
<dbReference type="eggNOG" id="KOG0371">
    <property type="taxonomic scope" value="Eukaryota"/>
</dbReference>
<dbReference type="GeneTree" id="ENSGT00550000074618"/>
<dbReference type="HOGENOM" id="CLU_004962_0_5_1"/>
<dbReference type="InParanoid" id="Q0P594"/>
<dbReference type="OMA" id="YRCENQA"/>
<dbReference type="OrthoDB" id="1930084at2759"/>
<dbReference type="TreeFam" id="TF105559"/>
<dbReference type="Reactome" id="R-BTA-113501">
    <property type="pathway name" value="Inhibition of replication initiation of damaged DNA by RB1/E2F1"/>
</dbReference>
<dbReference type="Reactome" id="R-BTA-1295596">
    <property type="pathway name" value="Spry regulation of FGF signaling"/>
</dbReference>
<dbReference type="Reactome" id="R-BTA-141444">
    <property type="pathway name" value="Amplification of signal from unattached kinetochores via a MAD2 inhibitory signal"/>
</dbReference>
<dbReference type="Reactome" id="R-BTA-180024">
    <property type="pathway name" value="DARPP-32 events"/>
</dbReference>
<dbReference type="Reactome" id="R-BTA-195253">
    <property type="pathway name" value="Degradation of beta-catenin by the destruction complex"/>
</dbReference>
<dbReference type="Reactome" id="R-BTA-196299">
    <property type="pathway name" value="Beta-catenin phosphorylation cascade"/>
</dbReference>
<dbReference type="Reactome" id="R-BTA-198753">
    <property type="pathway name" value="ERK/MAPK targets"/>
</dbReference>
<dbReference type="Reactome" id="R-BTA-202670">
    <property type="pathway name" value="ERKs are inactivated"/>
</dbReference>
<dbReference type="Reactome" id="R-BTA-2467813">
    <property type="pathway name" value="Separation of Sister Chromatids"/>
</dbReference>
<dbReference type="Reactome" id="R-BTA-2500257">
    <property type="pathway name" value="Resolution of Sister Chromatid Cohesion"/>
</dbReference>
<dbReference type="Reactome" id="R-BTA-389356">
    <property type="pathway name" value="Co-stimulation by CD28"/>
</dbReference>
<dbReference type="Reactome" id="R-BTA-389513">
    <property type="pathway name" value="Co-inhibition by CTLA4"/>
</dbReference>
<dbReference type="Reactome" id="R-BTA-432142">
    <property type="pathway name" value="Platelet sensitization by LDL"/>
</dbReference>
<dbReference type="Reactome" id="R-BTA-4641262">
    <property type="pathway name" value="Disassembly of the destruction complex and recruitment of AXIN to the membrane"/>
</dbReference>
<dbReference type="Reactome" id="R-BTA-5663220">
    <property type="pathway name" value="RHO GTPases Activate Formins"/>
</dbReference>
<dbReference type="Reactome" id="R-BTA-5673000">
    <property type="pathway name" value="RAF activation"/>
</dbReference>
<dbReference type="Reactome" id="R-BTA-5675221">
    <property type="pathway name" value="Negative regulation of MAPK pathway"/>
</dbReference>
<dbReference type="Reactome" id="R-BTA-6804757">
    <property type="pathway name" value="Regulation of TP53 Degradation"/>
</dbReference>
<dbReference type="Reactome" id="R-BTA-6811558">
    <property type="pathway name" value="PI5P, PP2A and IER3 Regulate PI3K/AKT Signaling"/>
</dbReference>
<dbReference type="Reactome" id="R-BTA-68877">
    <property type="pathway name" value="Mitotic Prometaphase"/>
</dbReference>
<dbReference type="Reactome" id="R-BTA-69231">
    <property type="pathway name" value="Cyclin D associated events in G1"/>
</dbReference>
<dbReference type="Reactome" id="R-BTA-69273">
    <property type="pathway name" value="Cyclin A/B1/B2 associated events during G2/M transition"/>
</dbReference>
<dbReference type="Reactome" id="R-BTA-9648025">
    <property type="pathway name" value="EML4 and NUDC in mitotic spindle formation"/>
</dbReference>
<dbReference type="Reactome" id="R-BTA-9833482">
    <property type="pathway name" value="PKR-mediated signaling"/>
</dbReference>
<dbReference type="Proteomes" id="UP000009136">
    <property type="component" value="Chromosome 27"/>
</dbReference>
<dbReference type="Bgee" id="ENSBTAG00000009245">
    <property type="expression patterns" value="Expressed in occipital lobe and 104 other cell types or tissues"/>
</dbReference>
<dbReference type="GO" id="GO:0000775">
    <property type="term" value="C:chromosome, centromeric region"/>
    <property type="evidence" value="ECO:0007669"/>
    <property type="project" value="UniProtKB-SubCell"/>
</dbReference>
<dbReference type="GO" id="GO:0005737">
    <property type="term" value="C:cytoplasm"/>
    <property type="evidence" value="ECO:0000314"/>
    <property type="project" value="UniProtKB"/>
</dbReference>
<dbReference type="GO" id="GO:0005829">
    <property type="term" value="C:cytosol"/>
    <property type="evidence" value="ECO:0000318"/>
    <property type="project" value="GO_Central"/>
</dbReference>
<dbReference type="GO" id="GO:0090443">
    <property type="term" value="C:FAR/SIN/STRIPAK complex"/>
    <property type="evidence" value="ECO:0000250"/>
    <property type="project" value="UniProtKB"/>
</dbReference>
<dbReference type="GO" id="GO:0005634">
    <property type="term" value="C:nucleus"/>
    <property type="evidence" value="ECO:0007669"/>
    <property type="project" value="UniProtKB-SubCell"/>
</dbReference>
<dbReference type="GO" id="GO:0000922">
    <property type="term" value="C:spindle pole"/>
    <property type="evidence" value="ECO:0007669"/>
    <property type="project" value="UniProtKB-SubCell"/>
</dbReference>
<dbReference type="GO" id="GO:0046872">
    <property type="term" value="F:metal ion binding"/>
    <property type="evidence" value="ECO:0007669"/>
    <property type="project" value="UniProtKB-KW"/>
</dbReference>
<dbReference type="GO" id="GO:0004722">
    <property type="term" value="F:protein serine/threonine phosphatase activity"/>
    <property type="evidence" value="ECO:0000318"/>
    <property type="project" value="GO_Central"/>
</dbReference>
<dbReference type="GO" id="GO:0000278">
    <property type="term" value="P:mitotic cell cycle"/>
    <property type="evidence" value="ECO:0000318"/>
    <property type="project" value="GO_Central"/>
</dbReference>
<dbReference type="CDD" id="cd07415">
    <property type="entry name" value="MPP_PP2A_PP4_PP6"/>
    <property type="match status" value="1"/>
</dbReference>
<dbReference type="FunFam" id="3.60.21.10:FF:000003">
    <property type="entry name" value="Serine/threonine-protein phosphatase"/>
    <property type="match status" value="1"/>
</dbReference>
<dbReference type="Gene3D" id="3.60.21.10">
    <property type="match status" value="1"/>
</dbReference>
<dbReference type="InterPro" id="IPR004843">
    <property type="entry name" value="Calcineurin-like_PHP_ApaH"/>
</dbReference>
<dbReference type="InterPro" id="IPR029052">
    <property type="entry name" value="Metallo-depent_PP-like"/>
</dbReference>
<dbReference type="InterPro" id="IPR047129">
    <property type="entry name" value="PPA2-like"/>
</dbReference>
<dbReference type="InterPro" id="IPR006186">
    <property type="entry name" value="Ser/Thr-sp_prot-phosphatase"/>
</dbReference>
<dbReference type="PANTHER" id="PTHR45619">
    <property type="entry name" value="SERINE/THREONINE-PROTEIN PHOSPHATASE PP2A-RELATED"/>
    <property type="match status" value="1"/>
</dbReference>
<dbReference type="Pfam" id="PF00149">
    <property type="entry name" value="Metallophos"/>
    <property type="match status" value="1"/>
</dbReference>
<dbReference type="PRINTS" id="PR00114">
    <property type="entry name" value="STPHPHTASE"/>
</dbReference>
<dbReference type="SMART" id="SM00156">
    <property type="entry name" value="PP2Ac"/>
    <property type="match status" value="1"/>
</dbReference>
<dbReference type="SUPFAM" id="SSF56300">
    <property type="entry name" value="Metallo-dependent phosphatases"/>
    <property type="match status" value="1"/>
</dbReference>
<dbReference type="PROSITE" id="PS00125">
    <property type="entry name" value="SER_THR_PHOSPHATASE"/>
    <property type="match status" value="1"/>
</dbReference>
<proteinExistence type="evidence at protein level"/>
<feature type="chain" id="PRO_0000283053" description="Serine/threonine-protein phosphatase 2A catalytic subunit beta isoform">
    <location>
        <begin position="1"/>
        <end position="309"/>
    </location>
</feature>
<feature type="active site" description="Proton donor" evidence="1">
    <location>
        <position position="118"/>
    </location>
</feature>
<feature type="binding site" evidence="1">
    <location>
        <position position="57"/>
    </location>
    <ligand>
        <name>Mn(2+)</name>
        <dbReference type="ChEBI" id="CHEBI:29035"/>
        <label>1</label>
    </ligand>
</feature>
<feature type="binding site" evidence="1">
    <location>
        <position position="59"/>
    </location>
    <ligand>
        <name>Mn(2+)</name>
        <dbReference type="ChEBI" id="CHEBI:29035"/>
        <label>1</label>
    </ligand>
</feature>
<feature type="binding site" evidence="1">
    <location>
        <position position="85"/>
    </location>
    <ligand>
        <name>Mn(2+)</name>
        <dbReference type="ChEBI" id="CHEBI:29035"/>
        <label>1</label>
    </ligand>
</feature>
<feature type="binding site" evidence="1">
    <location>
        <position position="85"/>
    </location>
    <ligand>
        <name>Mn(2+)</name>
        <dbReference type="ChEBI" id="CHEBI:29035"/>
        <label>2</label>
    </ligand>
</feature>
<feature type="binding site" evidence="1">
    <location>
        <position position="117"/>
    </location>
    <ligand>
        <name>Mn(2+)</name>
        <dbReference type="ChEBI" id="CHEBI:29035"/>
        <label>2</label>
    </ligand>
</feature>
<feature type="binding site" evidence="1">
    <location>
        <position position="167"/>
    </location>
    <ligand>
        <name>Mn(2+)</name>
        <dbReference type="ChEBI" id="CHEBI:29035"/>
        <label>2</label>
    </ligand>
</feature>
<feature type="binding site" evidence="1">
    <location>
        <position position="241"/>
    </location>
    <ligand>
        <name>Mn(2+)</name>
        <dbReference type="ChEBI" id="CHEBI:29035"/>
        <label>2</label>
    </ligand>
</feature>
<feature type="modified residue" description="Phosphotyrosine" evidence="3">
    <location>
        <position position="307"/>
    </location>
</feature>
<feature type="modified residue" description="Leucine methyl ester" evidence="2">
    <location>
        <position position="309"/>
    </location>
</feature>
<evidence type="ECO:0000250" key="1"/>
<evidence type="ECO:0000250" key="2">
    <source>
        <dbReference type="UniProtKB" id="P62714"/>
    </source>
</evidence>
<evidence type="ECO:0000250" key="3">
    <source>
        <dbReference type="UniProtKB" id="P62715"/>
    </source>
</evidence>
<evidence type="ECO:0000269" key="4">
    <source>
    </source>
</evidence>
<evidence type="ECO:0000305" key="5"/>
<comment type="function">
    <text evidence="2">Catalytic subunit of protein phosphatase 2A (PP2A), a serine/threonine phosphatase involved in the regulation of a wide variety of enzymes, signal transduction pathways, and cellular events. PP2A can modulate the activity of phosphorylase B kinase, casein kinase 2, mitogen-stimulated S6 kinase, and MAP-2 kinase. Part of the striatin-interacting phosphatase and kinase (STRIPAK) complexes. STRIPAK complexes have critical roles in protein (de)phosphorylation and are regulators of multiple signaling pathways including Hippo, MAPK, nuclear receptor and cytoskeleton remodeling. Different types of STRIPAK complexes are involved in a variety of biological processes such as cell growth, differentiation, apoptosis, metabolism and immune regulation.</text>
</comment>
<comment type="catalytic activity">
    <reaction evidence="2">
        <text>O-phospho-L-seryl-[protein] + H2O = L-seryl-[protein] + phosphate</text>
        <dbReference type="Rhea" id="RHEA:20629"/>
        <dbReference type="Rhea" id="RHEA-COMP:9863"/>
        <dbReference type="Rhea" id="RHEA-COMP:11604"/>
        <dbReference type="ChEBI" id="CHEBI:15377"/>
        <dbReference type="ChEBI" id="CHEBI:29999"/>
        <dbReference type="ChEBI" id="CHEBI:43474"/>
        <dbReference type="ChEBI" id="CHEBI:83421"/>
        <dbReference type="EC" id="3.1.3.16"/>
    </reaction>
    <physiologicalReaction direction="left-to-right" evidence="2">
        <dbReference type="Rhea" id="RHEA:20630"/>
    </physiologicalReaction>
</comment>
<comment type="catalytic activity">
    <reaction evidence="2">
        <text>O-phospho-L-threonyl-[protein] + H2O = L-threonyl-[protein] + phosphate</text>
        <dbReference type="Rhea" id="RHEA:47004"/>
        <dbReference type="Rhea" id="RHEA-COMP:11060"/>
        <dbReference type="Rhea" id="RHEA-COMP:11605"/>
        <dbReference type="ChEBI" id="CHEBI:15377"/>
        <dbReference type="ChEBI" id="CHEBI:30013"/>
        <dbReference type="ChEBI" id="CHEBI:43474"/>
        <dbReference type="ChEBI" id="CHEBI:61977"/>
        <dbReference type="EC" id="3.1.3.16"/>
    </reaction>
    <physiologicalReaction direction="left-to-right" evidence="2">
        <dbReference type="Rhea" id="RHEA:47005"/>
    </physiologicalReaction>
</comment>
<comment type="cofactor">
    <cofactor evidence="1">
        <name>Mn(2+)</name>
        <dbReference type="ChEBI" id="CHEBI:29035"/>
    </cofactor>
    <text evidence="1">Binds 2 manganese ions per subunit.</text>
</comment>
<comment type="subunit">
    <text evidence="2 4">PP2A consists of a common heterodimeric core enzyme (composed of a 36 kDa catalytic subunit (subunit C) and a 65 kDa constant regulatory subunit (PR65) (subunit A)) that associates with a variety of regulatory subunits. Proteins that associate with the core dimer include three families of regulatory subunits B (the R2/B/PR55/B55, R3/B''/PR72/PR130/PR59 and R5/B'/B56 families), the 48 kDa variable regulatory subunit, viral proteins, and cell signaling molecules. Binds PPME1. May indirectly interact with SGO1, most probably through regulatory B56 subunits (By similarity). Found in a complex with at least ARL2, PPP2CB, PPP2R1A, PPP2R2A, PPP2R5E and TBCD. Interacts with TBCD. Interacts with CTTNBP2NL (PubMed:12912990). Interacts with PTPA (By similarity). Part of the core of STRIPAK complexes composed of PP2A catalytic and scaffolding subunits, the striatins (PP2A regulatory subunits), the striatin-associated proteins MOB4, STRIP1 and STRIP2, PDCD10 and members of the STE20 kinases, such as STK24 and STK26 (By similarity).</text>
</comment>
<comment type="subcellular location">
    <subcellularLocation>
        <location evidence="2">Cytoplasm</location>
    </subcellularLocation>
    <subcellularLocation>
        <location evidence="2">Nucleus</location>
    </subcellularLocation>
    <subcellularLocation>
        <location evidence="2">Chromosome</location>
        <location evidence="2">Centromere</location>
    </subcellularLocation>
    <subcellularLocation>
        <location evidence="2">Cytoplasm</location>
        <location evidence="2">Cytoskeleton</location>
        <location evidence="2">Spindle pole</location>
    </subcellularLocation>
    <text evidence="2">In prometaphase cells, but not in anaphase cells, localizes at centromeres. During mitosis, also found at spindle poles.</text>
</comment>
<comment type="PTM">
    <text evidence="1">Reversibly methyl esterified on Leu-309 by leucine carboxyl methyltransferase 1 (LCMT1) and protein phosphatase methylesterase 1 (PPME1). Carboxyl methylation influences the affinity of the catalytic subunit for the different regulatory subunits, thereby modulating the PP2A holoenzyme's substrate specificity, enzyme activity and cellular localization (By similarity).</text>
</comment>
<comment type="PTM">
    <text evidence="1">Phosphorylation of either threonine (by autophosphorylation-activated protein kinase) or tyrosine results in inactivation of the phosphatase. Auto-dephosphorylation has been suggested as a mechanism for reactivation (By similarity).</text>
</comment>
<comment type="PTM">
    <text evidence="3">May be monoubiquitinated by NOSIP.</text>
</comment>
<comment type="similarity">
    <text evidence="5">Belongs to the PPP phosphatase family. PP-1 subfamily.</text>
</comment>
<reference key="1">
    <citation type="submission" date="2006-08" db="EMBL/GenBank/DDBJ databases">
        <authorList>
            <consortium name="NIH - Mammalian Gene Collection (MGC) project"/>
        </authorList>
    </citation>
    <scope>NUCLEOTIDE SEQUENCE [LARGE SCALE MRNA]</scope>
    <source>
        <strain>Hereford</strain>
        <tissue>Fetal muscle</tissue>
    </source>
</reference>
<reference key="2">
    <citation type="journal article" date="2003" name="J. Biol. Chem.">
        <title>Cytosolic Arl2 is complexed with cofactor D and protein phosphatase 2A.</title>
        <authorList>
            <person name="Shern J.F."/>
            <person name="Sharer J.D."/>
            <person name="Pallas D.C."/>
            <person name="Bartolini F."/>
            <person name="Cowan N.J."/>
            <person name="Reed M.S."/>
            <person name="Pohl J."/>
            <person name="Kahn R.A."/>
        </authorList>
    </citation>
    <scope>INTERACTION WITH TBCD</scope>
    <scope>IDENTIFICATION IN A COMPLEX WITH ARL2; PPP2R1A; PPP2R2A; PPP2R5E AND TBCD</scope>
    <scope>IDENTIFICATION BY MASS SPECTROMETRY</scope>
    <scope>SUBCELLULAR LOCATION</scope>
</reference>
<accession>Q0P594</accession>
<organism>
    <name type="scientific">Bos taurus</name>
    <name type="common">Bovine</name>
    <dbReference type="NCBI Taxonomy" id="9913"/>
    <lineage>
        <taxon>Eukaryota</taxon>
        <taxon>Metazoa</taxon>
        <taxon>Chordata</taxon>
        <taxon>Craniata</taxon>
        <taxon>Vertebrata</taxon>
        <taxon>Euteleostomi</taxon>
        <taxon>Mammalia</taxon>
        <taxon>Eutheria</taxon>
        <taxon>Laurasiatheria</taxon>
        <taxon>Artiodactyla</taxon>
        <taxon>Ruminantia</taxon>
        <taxon>Pecora</taxon>
        <taxon>Bovidae</taxon>
        <taxon>Bovinae</taxon>
        <taxon>Bos</taxon>
    </lineage>
</organism>